<gene>
    <name type="primary">MT3A</name>
    <name type="synonym">ML2</name>
    <name type="ORF">OsI_000763</name>
</gene>
<evidence type="ECO:0000305" key="1"/>
<protein>
    <recommendedName>
        <fullName>Metallothionein-like protein 3A</fullName>
    </recommendedName>
    <alternativeName>
        <fullName>Class I metallothionein-like protein 3A</fullName>
    </alternativeName>
    <alternativeName>
        <fullName>OsMT-I-3a</fullName>
        <shortName>OsMT3</shortName>
        <shortName>OsMT3a</shortName>
    </alternativeName>
</protein>
<feature type="chain" id="PRO_0000296355" description="Metallothionein-like protein 3A">
    <location>
        <begin position="1"/>
        <end position="62"/>
    </location>
</feature>
<keyword id="KW-0479">Metal-binding</keyword>
<keyword id="KW-0480">Metal-thiolate cluster</keyword>
<keyword id="KW-1185">Reference proteome</keyword>
<proteinExistence type="inferred from homology"/>
<reference key="1">
    <citation type="online journal article" date="1999" name="Plant Gene Register">
        <title>Nucleotide sequences of cDNAs encoding three types of metallothionein(MT)-like protein from Oryza sativa L.</title>
        <authorList>
            <person name="Kim Y.H."/>
            <person name="Lee M.C."/>
            <person name="Yun D.W."/>
            <person name="Eun M.Y."/>
        </authorList>
        <locator>PGR99-019</locator>
    </citation>
    <scope>NUCLEOTIDE SEQUENCE [MRNA]</scope>
    <source>
        <strain>cv. Milyang 23</strain>
        <tissue>Immature seed</tissue>
    </source>
</reference>
<reference key="2">
    <citation type="submission" date="1999-05" db="EMBL/GenBank/DDBJ databases">
        <title>Investigation of genes on the subterminal long arm of rice chromosome 6.</title>
        <authorList>
            <person name="Wang W."/>
            <person name="Zhu L."/>
        </authorList>
    </citation>
    <scope>NUCLEOTIDE SEQUENCE [MRNA]</scope>
</reference>
<reference key="3">
    <citation type="journal article" date="2005" name="PLoS Biol.">
        <title>The genomes of Oryza sativa: a history of duplications.</title>
        <authorList>
            <person name="Yu J."/>
            <person name="Wang J."/>
            <person name="Lin W."/>
            <person name="Li S."/>
            <person name="Li H."/>
            <person name="Zhou J."/>
            <person name="Ni P."/>
            <person name="Dong W."/>
            <person name="Hu S."/>
            <person name="Zeng C."/>
            <person name="Zhang J."/>
            <person name="Zhang Y."/>
            <person name="Li R."/>
            <person name="Xu Z."/>
            <person name="Li S."/>
            <person name="Li X."/>
            <person name="Zheng H."/>
            <person name="Cong L."/>
            <person name="Lin L."/>
            <person name="Yin J."/>
            <person name="Geng J."/>
            <person name="Li G."/>
            <person name="Shi J."/>
            <person name="Liu J."/>
            <person name="Lv H."/>
            <person name="Li J."/>
            <person name="Wang J."/>
            <person name="Deng Y."/>
            <person name="Ran L."/>
            <person name="Shi X."/>
            <person name="Wang X."/>
            <person name="Wu Q."/>
            <person name="Li C."/>
            <person name="Ren X."/>
            <person name="Wang J."/>
            <person name="Wang X."/>
            <person name="Li D."/>
            <person name="Liu D."/>
            <person name="Zhang X."/>
            <person name="Ji Z."/>
            <person name="Zhao W."/>
            <person name="Sun Y."/>
            <person name="Zhang Z."/>
            <person name="Bao J."/>
            <person name="Han Y."/>
            <person name="Dong L."/>
            <person name="Ji J."/>
            <person name="Chen P."/>
            <person name="Wu S."/>
            <person name="Liu J."/>
            <person name="Xiao Y."/>
            <person name="Bu D."/>
            <person name="Tan J."/>
            <person name="Yang L."/>
            <person name="Ye C."/>
            <person name="Zhang J."/>
            <person name="Xu J."/>
            <person name="Zhou Y."/>
            <person name="Yu Y."/>
            <person name="Zhang B."/>
            <person name="Zhuang S."/>
            <person name="Wei H."/>
            <person name="Liu B."/>
            <person name="Lei M."/>
            <person name="Yu H."/>
            <person name="Li Y."/>
            <person name="Xu H."/>
            <person name="Wei S."/>
            <person name="He X."/>
            <person name="Fang L."/>
            <person name="Zhang Z."/>
            <person name="Zhang Y."/>
            <person name="Huang X."/>
            <person name="Su Z."/>
            <person name="Tong W."/>
            <person name="Li J."/>
            <person name="Tong Z."/>
            <person name="Li S."/>
            <person name="Ye J."/>
            <person name="Wang L."/>
            <person name="Fang L."/>
            <person name="Lei T."/>
            <person name="Chen C.-S."/>
            <person name="Chen H.-C."/>
            <person name="Xu Z."/>
            <person name="Li H."/>
            <person name="Huang H."/>
            <person name="Zhang F."/>
            <person name="Xu H."/>
            <person name="Li N."/>
            <person name="Zhao C."/>
            <person name="Li S."/>
            <person name="Dong L."/>
            <person name="Huang Y."/>
            <person name="Li L."/>
            <person name="Xi Y."/>
            <person name="Qi Q."/>
            <person name="Li W."/>
            <person name="Zhang B."/>
            <person name="Hu W."/>
            <person name="Zhang Y."/>
            <person name="Tian X."/>
            <person name="Jiao Y."/>
            <person name="Liang X."/>
            <person name="Jin J."/>
            <person name="Gao L."/>
            <person name="Zheng W."/>
            <person name="Hao B."/>
            <person name="Liu S.-M."/>
            <person name="Wang W."/>
            <person name="Yuan L."/>
            <person name="Cao M."/>
            <person name="McDermott J."/>
            <person name="Samudrala R."/>
            <person name="Wang J."/>
            <person name="Wong G.K.-S."/>
            <person name="Yang H."/>
        </authorList>
    </citation>
    <scope>NUCLEOTIDE SEQUENCE [LARGE SCALE GENOMIC DNA]</scope>
    <source>
        <strain>cv. 93-11</strain>
    </source>
</reference>
<reference key="4">
    <citation type="submission" date="2007-04" db="EMBL/GenBank/DDBJ databases">
        <title>A comparative transcriptome map of early and late salinity stress responses in contrasting genotypes of Oryza sativa L.</title>
        <authorList>
            <person name="Kumari S."/>
            <person name="Panjabi V."/>
            <person name="Singla-Pareek S.L."/>
            <person name="Sopory S.K."/>
            <person name="Pareek A."/>
        </authorList>
    </citation>
    <scope>NUCLEOTIDE SEQUENCE [LARGE SCALE MRNA]</scope>
    <source>
        <tissue>Shoot</tissue>
    </source>
</reference>
<reference key="5">
    <citation type="journal article" date="2006" name="J. Biochem. Mol. Biol.">
        <title>Molecular analyses of the metallothionein gene family in rice (Oryza sativa L.).</title>
        <authorList>
            <person name="Zhou G."/>
            <person name="Xu Y."/>
            <person name="Li J."/>
            <person name="Yang L."/>
            <person name="Liu J.-Y."/>
        </authorList>
    </citation>
    <scope>GENE FAMILY</scope>
</reference>
<comment type="function">
    <text evidence="1">Metallothioneins have a high content of cysteine residues that bind various heavy metals.</text>
</comment>
<comment type="similarity">
    <text evidence="1">Belongs to the metallothionein superfamily. Type 15 family.</text>
</comment>
<name>MT3A_ORYSI</name>
<organism>
    <name type="scientific">Oryza sativa subsp. indica</name>
    <name type="common">Rice</name>
    <dbReference type="NCBI Taxonomy" id="39946"/>
    <lineage>
        <taxon>Eukaryota</taxon>
        <taxon>Viridiplantae</taxon>
        <taxon>Streptophyta</taxon>
        <taxon>Embryophyta</taxon>
        <taxon>Tracheophyta</taxon>
        <taxon>Spermatophyta</taxon>
        <taxon>Magnoliopsida</taxon>
        <taxon>Liliopsida</taxon>
        <taxon>Poales</taxon>
        <taxon>Poaceae</taxon>
        <taxon>BOP clade</taxon>
        <taxon>Oryzoideae</taxon>
        <taxon>Oryzeae</taxon>
        <taxon>Oryzinae</taxon>
        <taxon>Oryza</taxon>
        <taxon>Oryza sativa</taxon>
    </lineage>
</organism>
<dbReference type="EMBL" id="AF001396">
    <property type="protein sequence ID" value="AAB53811.1"/>
    <property type="molecule type" value="mRNA"/>
</dbReference>
<dbReference type="EMBL" id="AF147786">
    <property type="protein sequence ID" value="AAF03603.1"/>
    <property type="molecule type" value="mRNA"/>
</dbReference>
<dbReference type="EMBL" id="CM000126">
    <property type="protein sequence ID" value="EAY72916.1"/>
    <property type="molecule type" value="Genomic_DNA"/>
</dbReference>
<dbReference type="EMBL" id="EF576396">
    <property type="protein sequence ID" value="ABR25984.1"/>
    <property type="molecule type" value="mRNA"/>
</dbReference>
<dbReference type="PIR" id="T03438">
    <property type="entry name" value="T03438"/>
</dbReference>
<dbReference type="EnsemblPlants" id="BGIOSGA002954-TA">
    <property type="protein sequence ID" value="BGIOSGA002954-PA"/>
    <property type="gene ID" value="BGIOSGA002954"/>
</dbReference>
<dbReference type="EnsemblPlants" id="OsGoSa_01g0007000.01">
    <property type="protein sequence ID" value="OsGoSa_01g0007000.01"/>
    <property type="gene ID" value="OsGoSa_01g0007000"/>
</dbReference>
<dbReference type="EnsemblPlants" id="OsIR64_01g0006970.01">
    <property type="protein sequence ID" value="OsIR64_01g0006970.01"/>
    <property type="gene ID" value="OsIR64_01g0006970"/>
</dbReference>
<dbReference type="EnsemblPlants" id="OsKYG_01g0006970.01">
    <property type="protein sequence ID" value="OsKYG_01g0006970.01"/>
    <property type="gene ID" value="OsKYG_01g0006970"/>
</dbReference>
<dbReference type="EnsemblPlants" id="OsLaMu_01g0006920.01">
    <property type="protein sequence ID" value="OsLaMu_01g0006920.01"/>
    <property type="gene ID" value="OsLaMu_01g0006920"/>
</dbReference>
<dbReference type="EnsemblPlants" id="OsLima_01g0006810.01">
    <property type="protein sequence ID" value="OsLima_01g0006810.01"/>
    <property type="gene ID" value="OsLima_01g0006810"/>
</dbReference>
<dbReference type="EnsemblPlants" id="OsLiXu_01g0007010.01">
    <property type="protein sequence ID" value="OsLiXu_01g0007010.01"/>
    <property type="gene ID" value="OsLiXu_01g0007010"/>
</dbReference>
<dbReference type="EnsemblPlants" id="OsLiXu_Ung0003630.01">
    <property type="protein sequence ID" value="OsLiXu_Ung0003630.01"/>
    <property type="gene ID" value="OsLiXu_Ung0003630"/>
</dbReference>
<dbReference type="EnsemblPlants" id="OsMH63_01G007210_01">
    <property type="protein sequence ID" value="OsMH63_01G007210_01"/>
    <property type="gene ID" value="OsMH63_01G007210"/>
</dbReference>
<dbReference type="EnsemblPlants" id="OsPr106_01g0007030.01">
    <property type="protein sequence ID" value="OsPr106_01g0007030.01"/>
    <property type="gene ID" value="OsPr106_01g0007030"/>
</dbReference>
<dbReference type="EnsemblPlants" id="OsZS97_01G006820_01">
    <property type="protein sequence ID" value="OsZS97_01G006820_01"/>
    <property type="gene ID" value="OsZS97_01G006820"/>
</dbReference>
<dbReference type="Gramene" id="BGIOSGA002954-TA">
    <property type="protein sequence ID" value="BGIOSGA002954-PA"/>
    <property type="gene ID" value="BGIOSGA002954"/>
</dbReference>
<dbReference type="Gramene" id="OsGoSa_01g0007000.01">
    <property type="protein sequence ID" value="OsGoSa_01g0007000.01"/>
    <property type="gene ID" value="OsGoSa_01g0007000"/>
</dbReference>
<dbReference type="Gramene" id="OsIR64_01g0006970.01">
    <property type="protein sequence ID" value="OsIR64_01g0006970.01"/>
    <property type="gene ID" value="OsIR64_01g0006970"/>
</dbReference>
<dbReference type="Gramene" id="OsKYG_01g0006970.01">
    <property type="protein sequence ID" value="OsKYG_01g0006970.01"/>
    <property type="gene ID" value="OsKYG_01g0006970"/>
</dbReference>
<dbReference type="Gramene" id="OsLaMu_01g0006920.01">
    <property type="protein sequence ID" value="OsLaMu_01g0006920.01"/>
    <property type="gene ID" value="OsLaMu_01g0006920"/>
</dbReference>
<dbReference type="Gramene" id="OsLima_01g0006810.01">
    <property type="protein sequence ID" value="OsLima_01g0006810.01"/>
    <property type="gene ID" value="OsLima_01g0006810"/>
</dbReference>
<dbReference type="Gramene" id="OsLiXu_01g0007010.01">
    <property type="protein sequence ID" value="OsLiXu_01g0007010.01"/>
    <property type="gene ID" value="OsLiXu_01g0007010"/>
</dbReference>
<dbReference type="Gramene" id="OsLiXu_Ung0003630.01">
    <property type="protein sequence ID" value="OsLiXu_Ung0003630.01"/>
    <property type="gene ID" value="OsLiXu_Ung0003630"/>
</dbReference>
<dbReference type="Gramene" id="OsMH63_01G007210_01">
    <property type="protein sequence ID" value="OsMH63_01G007210_01"/>
    <property type="gene ID" value="OsMH63_01G007210"/>
</dbReference>
<dbReference type="Gramene" id="OsPr106_01g0007030.01">
    <property type="protein sequence ID" value="OsPr106_01g0007030.01"/>
    <property type="gene ID" value="OsPr106_01g0007030"/>
</dbReference>
<dbReference type="Gramene" id="OsZS97_01G006820_01">
    <property type="protein sequence ID" value="OsZS97_01G006820_01"/>
    <property type="gene ID" value="OsZS97_01G006820"/>
</dbReference>
<dbReference type="HOGENOM" id="CLU_204176_0_0_1"/>
<dbReference type="OMA" id="ASCTCVN"/>
<dbReference type="OrthoDB" id="739871at2759"/>
<dbReference type="Proteomes" id="UP000007015">
    <property type="component" value="Chromosome 1"/>
</dbReference>
<dbReference type="GO" id="GO:0005507">
    <property type="term" value="F:copper ion binding"/>
    <property type="evidence" value="ECO:0007669"/>
    <property type="project" value="InterPro"/>
</dbReference>
<dbReference type="GO" id="GO:0008270">
    <property type="term" value="F:zinc ion binding"/>
    <property type="evidence" value="ECO:0007669"/>
    <property type="project" value="InterPro"/>
</dbReference>
<dbReference type="GO" id="GO:0006878">
    <property type="term" value="P:intracellular copper ion homeostasis"/>
    <property type="evidence" value="ECO:0007669"/>
    <property type="project" value="InterPro"/>
</dbReference>
<dbReference type="InterPro" id="IPR044671">
    <property type="entry name" value="MT3"/>
</dbReference>
<dbReference type="PANTHER" id="PTHR33357">
    <property type="entry name" value="METALLOTHIONEIN-LIKE PROTEIN 3"/>
    <property type="match status" value="1"/>
</dbReference>
<dbReference type="PANTHER" id="PTHR33357:SF3">
    <property type="entry name" value="METALLOTHIONEIN-LIKE PROTEIN 3"/>
    <property type="match status" value="1"/>
</dbReference>
<accession>A2WLS0</accession>
<accession>O04185</accession>
<accession>Q7F6G0</accession>
<sequence>MSDKCGNCDCADKSQCVKKGTSYGVVIVEAEKSHFEEVAAGEENGGCKCGTSCSCTDCKCGK</sequence>